<comment type="function">
    <text evidence="2">Component of the cytochrome c oxidase, the last enzyme in the mitochondrial electron transport chain which drives oxidative phosphorylation. The respiratory chain contains 3 multisubunit complexes succinate dehydrogenase (complex II, CII), ubiquinol-cytochrome c oxidoreductase (cytochrome b-c1 complex, complex III, CIII) and cytochrome c oxidase (complex IV, CIV), that cooperate to transfer electrons derived from NADH and succinate to molecular oxygen, creating an electrochemical gradient over the inner membrane that drives transmembrane transport and the ATP synthase. Cytochrome c oxidase is the component of the respiratory chain that catalyzes the reduction of oxygen to water. Electrons originating from reduced cytochrome c in the intermembrane space (IMS) are transferred via the dinuclear copper A center (CU(A)) of subunit 2 and heme A of subunit 1 to the active site in subunit 1, a binuclear center (BNC) formed by heme A3 and copper B (CU(B)). The BNC reduces molecular oxygen to 2 water molecules using 4 electrons from cytochrome c in the IMS and 4 protons from the mitochondrial matrix.</text>
</comment>
<comment type="pathway">
    <text evidence="2">Energy metabolism; oxidative phosphorylation.</text>
</comment>
<comment type="subunit">
    <text evidence="3 4 7 9 10">Component of the cytochrome c oxidase (complex IV, CIV), a multisubunit enzyme composed of 14 subunits. The complex is composed of a catalytic core of 3 subunits MT-CO1, MT-CO2 and MT-CO3, encoded in the mitochondrial DNA, and 11 supernumerary subunits COX4I1 (or COX4I2), COX5A, COX5B, COX6A1 (or COX6A2), COX6B1 (or COX6B2), COX6C, COX7A2 (or COX7A1), COX7B, COX7C, COX8A and NDUFA4, which are encoded in the nuclear genome (PubMed:30030519). The complex exists as a monomer or a dimer and forms supercomplexes (SCs) in the inner mitochondrial membrane with NADH-ubiquinone oxidoreductase (complex I, CI) and ubiquinol-cytochrome c oxidoreductase (cytochrome b-c1 complex, complex III, CIII), resulting in different assemblies (supercomplex SCI(1)III(2)IV(1) and megacomplex MCI(2)III(2)IV(2)) (PubMed:28844695). Interacts with AFG1L (PubMed:26759378). Interacts with PHB2; the interaction decreases in absence of SPHK2 (By similarity). Interacts with ABCB7; this interaction allows the regulation of cellular iron homeostasis and cellular reactive oxygen species (ROS) levels in cardiomyocytes (By similarity). Interacts with FLVCR2; this interaction occurs in the absence of heme and is disrupted upon heme binding. Interacts with IRGC (By similarity).</text>
</comment>
<comment type="interaction">
    <interactant intactId="EBI-1056574">
        <id>P13073</id>
    </interactant>
    <interactant intactId="EBI-359002">
        <id>P11182</id>
        <label>DBT</label>
    </interactant>
    <organismsDiffer>false</organismsDiffer>
    <experiments>2</experiments>
</comment>
<comment type="interaction">
    <interactant intactId="EBI-1056574">
        <id>P13073</id>
    </interactant>
    <interactant intactId="EBI-948266">
        <id>O14901</id>
        <label>KLF11</label>
    </interactant>
    <organismsDiffer>false</organismsDiffer>
    <experiments>3</experiments>
</comment>
<comment type="interaction">
    <interactant intactId="EBI-1056574">
        <id>P13073</id>
    </interactant>
    <interactant intactId="EBI-2117234">
        <id>P00395</id>
        <label>MT-CO1</label>
    </interactant>
    <organismsDiffer>false</organismsDiffer>
    <experiments>3</experiments>
</comment>
<comment type="interaction">
    <interactant intactId="EBI-1056574">
        <id>P13073</id>
    </interactant>
    <interactant intactId="EBI-727004">
        <id>O00560</id>
        <label>SDCBP</label>
    </interactant>
    <organismsDiffer>false</organismsDiffer>
    <experiments>4</experiments>
</comment>
<comment type="subcellular location">
    <subcellularLocation>
        <location evidence="10">Mitochondrion inner membrane</location>
        <topology evidence="10">Single-pass membrane protein</topology>
    </subcellularLocation>
</comment>
<comment type="tissue specificity">
    <text>Ubiquitous.</text>
</comment>
<comment type="disease" evidence="8 11">
    <disease id="DI-05937">
        <name>Mitochondrial complex IV deficiency, nuclear type 16</name>
        <acronym>MC4DN16</acronym>
        <description>An autosomal recessive mitochondrial disorder with onset in infancy and variable manifestations. MC4DN16 features include feeding difficulties, poor overall growth, short stature, microcephaly, developmental regression, severe hypotonia, and seizures. Cerebral and cerebellar atrophy, and abnormal lesions in the basal ganglia can be observed on brain imaging. Patient tissues show decreased levels and activity of mitochondrial respiratory complex IV.</description>
        <dbReference type="MIM" id="619060"/>
    </disease>
    <text>The disease is caused by variants affecting the gene represented in this entry.</text>
</comment>
<comment type="similarity">
    <text evidence="12">Belongs to the cytochrome c oxidase IV family.</text>
</comment>
<dbReference type="EMBL" id="M21575">
    <property type="protein sequence ID" value="AAA99312.1"/>
    <property type="molecule type" value="mRNA"/>
</dbReference>
<dbReference type="EMBL" id="M34600">
    <property type="protein sequence ID" value="AAA52059.1"/>
    <property type="molecule type" value="mRNA"/>
</dbReference>
<dbReference type="EMBL" id="X54802">
    <property type="protein sequence ID" value="CAA38573.1"/>
    <property type="molecule type" value="mRNA"/>
</dbReference>
<dbReference type="EMBL" id="U90915">
    <property type="protein sequence ID" value="AAB51058.1"/>
    <property type="molecule type" value="mRNA"/>
</dbReference>
<dbReference type="EMBL" id="AF005889">
    <property type="protein sequence ID" value="AAB94819.1"/>
    <property type="molecule type" value="Genomic_DNA"/>
</dbReference>
<dbReference type="EMBL" id="AF017115">
    <property type="protein sequence ID" value="AAC99578.1"/>
    <property type="molecule type" value="Genomic_DNA"/>
</dbReference>
<dbReference type="EMBL" id="AH005828">
    <property type="protein sequence ID" value="AAB97750.1"/>
    <property type="molecule type" value="Genomic_DNA"/>
</dbReference>
<dbReference type="EMBL" id="BT019825">
    <property type="protein sequence ID" value="AAV38628.1"/>
    <property type="molecule type" value="mRNA"/>
</dbReference>
<dbReference type="EMBL" id="AK311847">
    <property type="protein sequence ID" value="BAG34789.1"/>
    <property type="molecule type" value="mRNA"/>
</dbReference>
<dbReference type="EMBL" id="CH471114">
    <property type="protein sequence ID" value="EAW95437.1"/>
    <property type="molecule type" value="Genomic_DNA"/>
</dbReference>
<dbReference type="EMBL" id="CH471114">
    <property type="protein sequence ID" value="EAW95438.1"/>
    <property type="molecule type" value="Genomic_DNA"/>
</dbReference>
<dbReference type="EMBL" id="BC008704">
    <property type="protein sequence ID" value="AAH08704.1"/>
    <property type="molecule type" value="mRNA"/>
</dbReference>
<dbReference type="EMBL" id="BC021236">
    <property type="protein sequence ID" value="AAH21236.1"/>
    <property type="molecule type" value="mRNA"/>
</dbReference>
<dbReference type="EMBL" id="BC062437">
    <property type="protein sequence ID" value="AAH62437.1"/>
    <property type="molecule type" value="mRNA"/>
</dbReference>
<dbReference type="CCDS" id="CCDS10955.1"/>
<dbReference type="PIR" id="S47012">
    <property type="entry name" value="OLHU4"/>
</dbReference>
<dbReference type="RefSeq" id="NP_001305715.1">
    <property type="nucleotide sequence ID" value="NM_001318786.3"/>
</dbReference>
<dbReference type="RefSeq" id="NP_001305717.1">
    <property type="nucleotide sequence ID" value="NM_001318788.1"/>
</dbReference>
<dbReference type="RefSeq" id="NP_001305723.1">
    <property type="nucleotide sequence ID" value="NM_001318794.1"/>
</dbReference>
<dbReference type="RefSeq" id="NP_001305726.1">
    <property type="nucleotide sequence ID" value="NM_001318797.1"/>
</dbReference>
<dbReference type="RefSeq" id="NP_001305731.1">
    <property type="nucleotide sequence ID" value="NM_001318802.1"/>
</dbReference>
<dbReference type="RefSeq" id="NP_001852.1">
    <property type="nucleotide sequence ID" value="NM_001861.6"/>
</dbReference>
<dbReference type="RefSeq" id="XP_047289579.1">
    <property type="nucleotide sequence ID" value="XM_047433623.1"/>
</dbReference>
<dbReference type="PDB" id="5Z62">
    <property type="method" value="EM"/>
    <property type="resolution" value="3.60 A"/>
    <property type="chains" value="D=26-169"/>
</dbReference>
<dbReference type="PDBsum" id="5Z62"/>
<dbReference type="SMR" id="P13073"/>
<dbReference type="BioGRID" id="107720">
    <property type="interactions" value="427"/>
</dbReference>
<dbReference type="ComplexPortal" id="CPX-6123">
    <property type="entry name" value="Mitochondrial respiratory chain complex IV"/>
</dbReference>
<dbReference type="CORUM" id="P13073"/>
<dbReference type="FunCoup" id="P13073">
    <property type="interactions" value="1673"/>
</dbReference>
<dbReference type="IntAct" id="P13073">
    <property type="interactions" value="185"/>
</dbReference>
<dbReference type="MINT" id="P13073"/>
<dbReference type="STRING" id="9606.ENSP00000457513"/>
<dbReference type="DrugBank" id="DB02659">
    <property type="generic name" value="Cholic Acid"/>
</dbReference>
<dbReference type="DrugBank" id="DB04464">
    <property type="generic name" value="N-Formylmethionine"/>
</dbReference>
<dbReference type="TCDB" id="3.D.4.11.1">
    <property type="family name" value="the proton-translocating cytochrome oxidase (cox) superfamily"/>
</dbReference>
<dbReference type="CarbonylDB" id="P13073"/>
<dbReference type="GlyGen" id="P13073">
    <property type="glycosylation" value="1 site, 1 O-linked glycan (1 site)"/>
</dbReference>
<dbReference type="iPTMnet" id="P13073"/>
<dbReference type="MetOSite" id="P13073"/>
<dbReference type="PhosphoSitePlus" id="P13073"/>
<dbReference type="SwissPalm" id="P13073"/>
<dbReference type="BioMuta" id="COX4I1"/>
<dbReference type="jPOST" id="P13073"/>
<dbReference type="MassIVE" id="P13073"/>
<dbReference type="PaxDb" id="9606-ENSP00000457513"/>
<dbReference type="PeptideAtlas" id="P13073"/>
<dbReference type="ProteomicsDB" id="52896"/>
<dbReference type="Pumba" id="P13073"/>
<dbReference type="TopDownProteomics" id="P13073"/>
<dbReference type="Antibodypedia" id="1266">
    <property type="antibodies" value="950 antibodies from 45 providers"/>
</dbReference>
<dbReference type="DNASU" id="1327"/>
<dbReference type="Ensembl" id="ENST00000253452.8">
    <property type="protein sequence ID" value="ENSP00000253452.2"/>
    <property type="gene ID" value="ENSG00000131143.10"/>
</dbReference>
<dbReference type="Ensembl" id="ENST00000561569.5">
    <property type="protein sequence ID" value="ENSP00000457015.1"/>
    <property type="gene ID" value="ENSG00000131143.10"/>
</dbReference>
<dbReference type="Ensembl" id="ENST00000562336.5">
    <property type="protein sequence ID" value="ENSP00000457513.1"/>
    <property type="gene ID" value="ENSG00000131143.10"/>
</dbReference>
<dbReference type="GeneID" id="1327"/>
<dbReference type="KEGG" id="hsa:1327"/>
<dbReference type="MANE-Select" id="ENST00000253452.8">
    <property type="protein sequence ID" value="ENSP00000253452.2"/>
    <property type="RefSeq nucleotide sequence ID" value="NM_001861.6"/>
    <property type="RefSeq protein sequence ID" value="NP_001852.1"/>
</dbReference>
<dbReference type="UCSC" id="uc002fje.4">
    <property type="organism name" value="human"/>
</dbReference>
<dbReference type="AGR" id="HGNC:2265"/>
<dbReference type="CTD" id="1327"/>
<dbReference type="DisGeNET" id="1327"/>
<dbReference type="GeneCards" id="COX4I1"/>
<dbReference type="HGNC" id="HGNC:2265">
    <property type="gene designation" value="COX4I1"/>
</dbReference>
<dbReference type="HPA" id="ENSG00000131143">
    <property type="expression patterns" value="Low tissue specificity"/>
</dbReference>
<dbReference type="MalaCards" id="COX4I1"/>
<dbReference type="MIM" id="123864">
    <property type="type" value="gene"/>
</dbReference>
<dbReference type="MIM" id="619060">
    <property type="type" value="phenotype"/>
</dbReference>
<dbReference type="neXtProt" id="NX_P13073"/>
<dbReference type="OpenTargets" id="ENSG00000131143"/>
<dbReference type="Orphanet" id="254905">
    <property type="disease" value="Isolated cytochrome C oxidase deficiency"/>
</dbReference>
<dbReference type="PharmGKB" id="PA26781"/>
<dbReference type="VEuPathDB" id="HostDB:ENSG00000131143"/>
<dbReference type="eggNOG" id="KOG4075">
    <property type="taxonomic scope" value="Eukaryota"/>
</dbReference>
<dbReference type="GeneTree" id="ENSGT00390000002407"/>
<dbReference type="HOGENOM" id="CLU_117340_1_0_1"/>
<dbReference type="InParanoid" id="P13073"/>
<dbReference type="OMA" id="LSDEWKH"/>
<dbReference type="OrthoDB" id="186013at2759"/>
<dbReference type="PAN-GO" id="P13073">
    <property type="GO annotations" value="2 GO annotations based on evolutionary models"/>
</dbReference>
<dbReference type="PhylomeDB" id="P13073"/>
<dbReference type="TreeFam" id="TF105061"/>
<dbReference type="BioCyc" id="MetaCyc:HS05494-MONOMER"/>
<dbReference type="PathwayCommons" id="P13073"/>
<dbReference type="Reactome" id="R-HSA-5628897">
    <property type="pathway name" value="TP53 Regulates Metabolic Genes"/>
</dbReference>
<dbReference type="Reactome" id="R-HSA-611105">
    <property type="pathway name" value="Respiratory electron transport"/>
</dbReference>
<dbReference type="Reactome" id="R-HSA-9707564">
    <property type="pathway name" value="Cytoprotection by HMOX1"/>
</dbReference>
<dbReference type="Reactome" id="R-HSA-9837999">
    <property type="pathway name" value="Mitochondrial protein degradation"/>
</dbReference>
<dbReference type="Reactome" id="R-HSA-9864848">
    <property type="pathway name" value="Complex IV assembly"/>
</dbReference>
<dbReference type="SignaLink" id="P13073"/>
<dbReference type="SIGNOR" id="P13073"/>
<dbReference type="UniPathway" id="UPA00705"/>
<dbReference type="BioGRID-ORCS" id="1327">
    <property type="hits" value="258 hits in 1175 CRISPR screens"/>
</dbReference>
<dbReference type="CD-CODE" id="FB4E32DD">
    <property type="entry name" value="Presynaptic clusters and postsynaptic densities"/>
</dbReference>
<dbReference type="ChiTaRS" id="COX4I1">
    <property type="organism name" value="human"/>
</dbReference>
<dbReference type="GeneWiki" id="COX4I1"/>
<dbReference type="GenomeRNAi" id="1327"/>
<dbReference type="Pharos" id="P13073">
    <property type="development level" value="Tbio"/>
</dbReference>
<dbReference type="PRO" id="PR:P13073"/>
<dbReference type="Proteomes" id="UP000005640">
    <property type="component" value="Chromosome 16"/>
</dbReference>
<dbReference type="RNAct" id="P13073">
    <property type="molecule type" value="protein"/>
</dbReference>
<dbReference type="Bgee" id="ENSG00000131143">
    <property type="expression patterns" value="Expressed in apex of heart and 218 other cell types or tissues"/>
</dbReference>
<dbReference type="ExpressionAtlas" id="P13073">
    <property type="expression patterns" value="baseline and differential"/>
</dbReference>
<dbReference type="GO" id="GO:0005829">
    <property type="term" value="C:cytosol"/>
    <property type="evidence" value="ECO:0007669"/>
    <property type="project" value="Ensembl"/>
</dbReference>
<dbReference type="GO" id="GO:0016020">
    <property type="term" value="C:membrane"/>
    <property type="evidence" value="ECO:0007005"/>
    <property type="project" value="UniProtKB"/>
</dbReference>
<dbReference type="GO" id="GO:0005743">
    <property type="term" value="C:mitochondrial inner membrane"/>
    <property type="evidence" value="ECO:0000250"/>
    <property type="project" value="UniProtKB"/>
</dbReference>
<dbReference type="GO" id="GO:0005758">
    <property type="term" value="C:mitochondrial intermembrane space"/>
    <property type="evidence" value="ECO:0000304"/>
    <property type="project" value="Reactome"/>
</dbReference>
<dbReference type="GO" id="GO:0031966">
    <property type="term" value="C:mitochondrial membrane"/>
    <property type="evidence" value="ECO:0000314"/>
    <property type="project" value="ComplexPortal"/>
</dbReference>
<dbReference type="GO" id="GO:0005739">
    <property type="term" value="C:mitochondrion"/>
    <property type="evidence" value="ECO:0000314"/>
    <property type="project" value="UniProtKB"/>
</dbReference>
<dbReference type="GO" id="GO:0005654">
    <property type="term" value="C:nucleoplasm"/>
    <property type="evidence" value="ECO:0000314"/>
    <property type="project" value="HPA"/>
</dbReference>
<dbReference type="GO" id="GO:0045277">
    <property type="term" value="C:respiratory chain complex IV"/>
    <property type="evidence" value="ECO:0000315"/>
    <property type="project" value="UniProtKB"/>
</dbReference>
<dbReference type="GO" id="GO:0004129">
    <property type="term" value="F:cytochrome-c oxidase activity"/>
    <property type="evidence" value="ECO:0000304"/>
    <property type="project" value="ProtInc"/>
</dbReference>
<dbReference type="GO" id="GO:0045333">
    <property type="term" value="P:cellular respiration"/>
    <property type="evidence" value="ECO:0000303"/>
    <property type="project" value="ComplexPortal"/>
</dbReference>
<dbReference type="GO" id="GO:0006091">
    <property type="term" value="P:generation of precursor metabolites and energy"/>
    <property type="evidence" value="ECO:0000304"/>
    <property type="project" value="ProtInc"/>
</dbReference>
<dbReference type="GO" id="GO:0006123">
    <property type="term" value="P:mitochondrial electron transport, cytochrome c to oxygen"/>
    <property type="evidence" value="ECO:0000318"/>
    <property type="project" value="GO_Central"/>
</dbReference>
<dbReference type="GO" id="GO:0007584">
    <property type="term" value="P:response to nutrient"/>
    <property type="evidence" value="ECO:0007669"/>
    <property type="project" value="Ensembl"/>
</dbReference>
<dbReference type="CDD" id="cd00922">
    <property type="entry name" value="Cyt_c_Oxidase_IV"/>
    <property type="match status" value="1"/>
</dbReference>
<dbReference type="FunFam" id="1.10.442.10:FF:000001">
    <property type="entry name" value="Cytochrome c oxidase subunit 4 isoform 1"/>
    <property type="match status" value="1"/>
</dbReference>
<dbReference type="Gene3D" id="1.10.442.10">
    <property type="entry name" value="Cytochrome c oxidase subunit IV"/>
    <property type="match status" value="1"/>
</dbReference>
<dbReference type="InterPro" id="IPR013288">
    <property type="entry name" value="Cyt_c_oxidase_su4"/>
</dbReference>
<dbReference type="InterPro" id="IPR004203">
    <property type="entry name" value="Cyt_c_oxidase_su4_fam"/>
</dbReference>
<dbReference type="InterPro" id="IPR036639">
    <property type="entry name" value="Cyt_c_oxidase_su4_sf"/>
</dbReference>
<dbReference type="PANTHER" id="PTHR10707:SF12">
    <property type="entry name" value="CYTOCHROME C OXIDASE SUBUNIT 4 ISOFORM 1, MITOCHONDRIAL"/>
    <property type="match status" value="1"/>
</dbReference>
<dbReference type="PANTHER" id="PTHR10707">
    <property type="entry name" value="CYTOCHROME C OXIDASE SUBUNIT IV"/>
    <property type="match status" value="1"/>
</dbReference>
<dbReference type="Pfam" id="PF02936">
    <property type="entry name" value="COX4"/>
    <property type="match status" value="1"/>
</dbReference>
<dbReference type="PRINTS" id="PR01873">
    <property type="entry name" value="CYTCOXIDASE4"/>
</dbReference>
<dbReference type="SUPFAM" id="SSF81406">
    <property type="entry name" value="Mitochondrial cytochrome c oxidase subunit IV"/>
    <property type="match status" value="1"/>
</dbReference>
<accession>P13073</accession>
<accession>B2R4J2</accession>
<accession>D3DUM7</accession>
<accession>Q6P666</accession>
<keyword id="KW-0002">3D-structure</keyword>
<keyword id="KW-0007">Acetylation</keyword>
<keyword id="KW-0903">Direct protein sequencing</keyword>
<keyword id="KW-0225">Disease variant</keyword>
<keyword id="KW-0472">Membrane</keyword>
<keyword id="KW-0496">Mitochondrion</keyword>
<keyword id="KW-0999">Mitochondrion inner membrane</keyword>
<keyword id="KW-0597">Phosphoprotein</keyword>
<keyword id="KW-1274">Primary mitochondrial disease</keyword>
<keyword id="KW-1267">Proteomics identification</keyword>
<keyword id="KW-1185">Reference proteome</keyword>
<keyword id="KW-0809">Transit peptide</keyword>
<keyword id="KW-0812">Transmembrane</keyword>
<keyword id="KW-1133">Transmembrane helix</keyword>
<feature type="transit peptide" description="Mitochondrion" evidence="5 15">
    <location>
        <begin position="1"/>
        <end position="22"/>
    </location>
</feature>
<feature type="chain" id="PRO_0000006084" description="Cytochrome c oxidase subunit 4 isoform 1, mitochondrial">
    <location>
        <begin position="23"/>
        <end position="169"/>
    </location>
</feature>
<feature type="topological domain" description="Mitochondrial matrix" evidence="10">
    <location>
        <begin position="23"/>
        <end position="98"/>
    </location>
</feature>
<feature type="transmembrane region" description="Helical" evidence="1">
    <location>
        <begin position="99"/>
        <end position="124"/>
    </location>
</feature>
<feature type="topological domain" description="Mitochondrial intermembrane" evidence="10">
    <location>
        <begin position="125"/>
        <end position="169"/>
    </location>
</feature>
<feature type="modified residue" description="N6-acetyllysine; alternate" evidence="4">
    <location>
        <position position="29"/>
    </location>
</feature>
<feature type="modified residue" description="N6-succinyllysine; alternate" evidence="4">
    <location>
        <position position="29"/>
    </location>
</feature>
<feature type="modified residue" description="N6-acetyllysine" evidence="14">
    <location>
        <position position="53"/>
    </location>
</feature>
<feature type="modified residue" description="Phosphoserine" evidence="3">
    <location>
        <position position="56"/>
    </location>
</feature>
<feature type="modified residue" description="Phosphoserine" evidence="3">
    <location>
        <position position="58"/>
    </location>
</feature>
<feature type="modified residue" description="N6-acetyllysine; alternate" evidence="14">
    <location>
        <position position="60"/>
    </location>
</feature>
<feature type="modified residue" description="N6-succinyllysine; alternate" evidence="4">
    <location>
        <position position="60"/>
    </location>
</feature>
<feature type="modified residue" description="N6-acetyllysine" evidence="4">
    <location>
        <position position="67"/>
    </location>
</feature>
<feature type="sequence variant" id="VAR_061127" description="In dbSNP:rs11557187." evidence="6">
    <original>A</original>
    <variation>T</variation>
    <location>
        <position position="3"/>
    </location>
</feature>
<feature type="sequence variant" id="VAR_002170">
    <original>Y</original>
    <variation>F</variation>
    <location>
        <position position="38"/>
    </location>
</feature>
<feature type="sequence variant" id="VAR_084181" description="In MC4DN16; decreased COX4I1 protein levels." evidence="8">
    <original>KT</original>
    <variation>NS</variation>
    <location>
        <begin position="101"/>
        <end position="102"/>
    </location>
</feature>
<feature type="sequence variant" id="VAR_084182" description="In MC4DN16." evidence="11">
    <original>P</original>
    <variation>T</variation>
    <location>
        <position position="152"/>
    </location>
</feature>
<sequence length="169" mass="19577">MLATRVFSLVGKRAISTSVCVRAHESVVKSEDFSLPAYMDRRDHPLPEVAHVKHLSASQKALKEKEKASWSSLSMDEKVELYRIKFKESFAEMNRGSNEWKTVVGGAMFFIGFTALVIMWQKHYVYGPLPQSFDKEWVAKQTKRMLDMKVNPIQGLASKWDYEKNEWKK</sequence>
<name>COX41_HUMAN</name>
<evidence type="ECO:0000250" key="1">
    <source>
        <dbReference type="UniProtKB" id="P00423"/>
    </source>
</evidence>
<evidence type="ECO:0000250" key="2">
    <source>
        <dbReference type="UniProtKB" id="P00424"/>
    </source>
</evidence>
<evidence type="ECO:0000250" key="3">
    <source>
        <dbReference type="UniProtKB" id="P10888"/>
    </source>
</evidence>
<evidence type="ECO:0000250" key="4">
    <source>
        <dbReference type="UniProtKB" id="P19783"/>
    </source>
</evidence>
<evidence type="ECO:0000269" key="5">
    <source>
    </source>
</evidence>
<evidence type="ECO:0000269" key="6">
    <source>
    </source>
</evidence>
<evidence type="ECO:0000269" key="7">
    <source>
    </source>
</evidence>
<evidence type="ECO:0000269" key="8">
    <source>
    </source>
</evidence>
<evidence type="ECO:0000269" key="9">
    <source>
    </source>
</evidence>
<evidence type="ECO:0000269" key="10">
    <source>
    </source>
</evidence>
<evidence type="ECO:0000269" key="11">
    <source>
    </source>
</evidence>
<evidence type="ECO:0000305" key="12"/>
<evidence type="ECO:0000312" key="13">
    <source>
        <dbReference type="HGNC" id="HGNC:2265"/>
    </source>
</evidence>
<evidence type="ECO:0007744" key="14">
    <source>
    </source>
</evidence>
<evidence type="ECO:0007744" key="15">
    <source>
    </source>
</evidence>
<protein>
    <recommendedName>
        <fullName>Cytochrome c oxidase subunit 4 isoform 1, mitochondrial</fullName>
    </recommendedName>
    <alternativeName>
        <fullName>Cytochrome c oxidase polypeptide IV</fullName>
    </alternativeName>
    <alternativeName>
        <fullName>Cytochrome c oxidase subunit IV isoform 1</fullName>
        <shortName>COX IV-1</shortName>
    </alternativeName>
</protein>
<organism>
    <name type="scientific">Homo sapiens</name>
    <name type="common">Human</name>
    <dbReference type="NCBI Taxonomy" id="9606"/>
    <lineage>
        <taxon>Eukaryota</taxon>
        <taxon>Metazoa</taxon>
        <taxon>Chordata</taxon>
        <taxon>Craniata</taxon>
        <taxon>Vertebrata</taxon>
        <taxon>Euteleostomi</taxon>
        <taxon>Mammalia</taxon>
        <taxon>Eutheria</taxon>
        <taxon>Euarchontoglires</taxon>
        <taxon>Primates</taxon>
        <taxon>Haplorrhini</taxon>
        <taxon>Catarrhini</taxon>
        <taxon>Hominidae</taxon>
        <taxon>Homo</taxon>
    </lineage>
</organism>
<proteinExistence type="evidence at protein level"/>
<gene>
    <name evidence="13" type="primary">COX4I1</name>
    <name evidence="13" type="synonym">COX4</name>
</gene>
<reference key="1">
    <citation type="journal article" date="1987" name="Gene">
        <title>Isolation of a cDNA clone encoding subunit IV of human cytochrome c oxidase.</title>
        <authorList>
            <person name="Zeviani M."/>
            <person name="Nakagawa M."/>
            <person name="Herbert J."/>
            <person name="Lomax M.I."/>
            <person name="Grossman L.I."/>
            <person name="Sherbany A.A."/>
            <person name="Miranda A.F."/>
            <person name="Dimauro S."/>
            <person name="Schon E.A."/>
        </authorList>
    </citation>
    <scope>NUCLEOTIDE SEQUENCE [MRNA]</scope>
    <source>
        <tissue>Liver</tissue>
    </source>
</reference>
<reference key="2">
    <citation type="journal article" date="1990" name="Gene">
        <title>Novel use of a chimpanzee pseudogene for chromosomal mapping of human cytochrome c oxidase subunit IV.</title>
        <authorList>
            <person name="Lomax M.I."/>
            <person name="Welch M.D."/>
            <person name="Darras B.T."/>
            <person name="Francke U."/>
            <person name="Grossman L.I."/>
        </authorList>
    </citation>
    <scope>NUCLEOTIDE SEQUENCE [MRNA]</scope>
</reference>
<reference key="3">
    <citation type="submission" date="1990-10" db="EMBL/GenBank/DDBJ databases">
        <authorList>
            <person name="Park S.J."/>
            <person name="Modica-Napolitano J."/>
            <person name="Gross A."/>
            <person name="Ernst S.G."/>
            <person name="Aprille J.R."/>
        </authorList>
    </citation>
    <scope>NUCLEOTIDE SEQUENCE [MRNA]</scope>
    <source>
        <tissue>Skeletal muscle</tissue>
    </source>
</reference>
<reference key="4">
    <citation type="submission" date="1997-03" db="EMBL/GenBank/DDBJ databases">
        <authorList>
            <person name="Yu W."/>
            <person name="Andersson B."/>
            <person name="Worley K.C."/>
            <person name="Muzny D.M."/>
            <person name="Ding Y."/>
            <person name="Liu W."/>
            <person name="Ricafrente J.Y."/>
            <person name="Wentland M.A."/>
            <person name="Lennon G."/>
            <person name="Gibbs R.A."/>
        </authorList>
    </citation>
    <scope>NUCLEOTIDE SEQUENCE [MRNA]</scope>
    <source>
        <tissue>Brain</tissue>
    </source>
</reference>
<reference key="5">
    <citation type="submission" date="1997-05" db="EMBL/GenBank/DDBJ databases">
        <title>The COX4 gene and a linked gene, COX4AL, are controlled by a bidirectional promoter.</title>
        <authorList>
            <person name="Bachman N.J."/>
            <person name="Wu W."/>
            <person name="Grossman L.I."/>
            <person name="Lomax M.I."/>
        </authorList>
    </citation>
    <scope>NUCLEOTIDE SEQUENCE [GENOMIC DNA]</scope>
    <source>
        <tissue>Placenta</tissue>
    </source>
</reference>
<reference key="6">
    <citation type="submission" date="1997-08" db="EMBL/GenBank/DDBJ databases">
        <title>COX4, the human cytochrome c oxidase subunit IV gene.</title>
        <authorList>
            <person name="Poyau A."/>
            <person name="Godinot C."/>
        </authorList>
    </citation>
    <scope>NUCLEOTIDE SEQUENCE [GENOMIC DNA]</scope>
</reference>
<reference key="7">
    <citation type="submission" date="2004-10" db="EMBL/GenBank/DDBJ databases">
        <title>Cloning of human full-length CDSs in BD Creator(TM) system donor vector.</title>
        <authorList>
            <person name="Kalnine N."/>
            <person name="Chen X."/>
            <person name="Rolfs A."/>
            <person name="Halleck A."/>
            <person name="Hines L."/>
            <person name="Eisenstein S."/>
            <person name="Koundinya M."/>
            <person name="Raphael J."/>
            <person name="Moreira D."/>
            <person name="Kelley T."/>
            <person name="LaBaer J."/>
            <person name="Lin Y."/>
            <person name="Phelan M."/>
            <person name="Farmer A."/>
        </authorList>
    </citation>
    <scope>NUCLEOTIDE SEQUENCE [LARGE SCALE MRNA]</scope>
</reference>
<reference key="8">
    <citation type="journal article" date="2004" name="Nat. Genet.">
        <title>Complete sequencing and characterization of 21,243 full-length human cDNAs.</title>
        <authorList>
            <person name="Ota T."/>
            <person name="Suzuki Y."/>
            <person name="Nishikawa T."/>
            <person name="Otsuki T."/>
            <person name="Sugiyama T."/>
            <person name="Irie R."/>
            <person name="Wakamatsu A."/>
            <person name="Hayashi K."/>
            <person name="Sato H."/>
            <person name="Nagai K."/>
            <person name="Kimura K."/>
            <person name="Makita H."/>
            <person name="Sekine M."/>
            <person name="Obayashi M."/>
            <person name="Nishi T."/>
            <person name="Shibahara T."/>
            <person name="Tanaka T."/>
            <person name="Ishii S."/>
            <person name="Yamamoto J."/>
            <person name="Saito K."/>
            <person name="Kawai Y."/>
            <person name="Isono Y."/>
            <person name="Nakamura Y."/>
            <person name="Nagahari K."/>
            <person name="Murakami K."/>
            <person name="Yasuda T."/>
            <person name="Iwayanagi T."/>
            <person name="Wagatsuma M."/>
            <person name="Shiratori A."/>
            <person name="Sudo H."/>
            <person name="Hosoiri T."/>
            <person name="Kaku Y."/>
            <person name="Kodaira H."/>
            <person name="Kondo H."/>
            <person name="Sugawara M."/>
            <person name="Takahashi M."/>
            <person name="Kanda K."/>
            <person name="Yokoi T."/>
            <person name="Furuya T."/>
            <person name="Kikkawa E."/>
            <person name="Omura Y."/>
            <person name="Abe K."/>
            <person name="Kamihara K."/>
            <person name="Katsuta N."/>
            <person name="Sato K."/>
            <person name="Tanikawa M."/>
            <person name="Yamazaki M."/>
            <person name="Ninomiya K."/>
            <person name="Ishibashi T."/>
            <person name="Yamashita H."/>
            <person name="Murakawa K."/>
            <person name="Fujimori K."/>
            <person name="Tanai H."/>
            <person name="Kimata M."/>
            <person name="Watanabe M."/>
            <person name="Hiraoka S."/>
            <person name="Chiba Y."/>
            <person name="Ishida S."/>
            <person name="Ono Y."/>
            <person name="Takiguchi S."/>
            <person name="Watanabe S."/>
            <person name="Yosida M."/>
            <person name="Hotuta T."/>
            <person name="Kusano J."/>
            <person name="Kanehori K."/>
            <person name="Takahashi-Fujii A."/>
            <person name="Hara H."/>
            <person name="Tanase T.-O."/>
            <person name="Nomura Y."/>
            <person name="Togiya S."/>
            <person name="Komai F."/>
            <person name="Hara R."/>
            <person name="Takeuchi K."/>
            <person name="Arita M."/>
            <person name="Imose N."/>
            <person name="Musashino K."/>
            <person name="Yuuki H."/>
            <person name="Oshima A."/>
            <person name="Sasaki N."/>
            <person name="Aotsuka S."/>
            <person name="Yoshikawa Y."/>
            <person name="Matsunawa H."/>
            <person name="Ichihara T."/>
            <person name="Shiohata N."/>
            <person name="Sano S."/>
            <person name="Moriya S."/>
            <person name="Momiyama H."/>
            <person name="Satoh N."/>
            <person name="Takami S."/>
            <person name="Terashima Y."/>
            <person name="Suzuki O."/>
            <person name="Nakagawa S."/>
            <person name="Senoh A."/>
            <person name="Mizoguchi H."/>
            <person name="Goto Y."/>
            <person name="Shimizu F."/>
            <person name="Wakebe H."/>
            <person name="Hishigaki H."/>
            <person name="Watanabe T."/>
            <person name="Sugiyama A."/>
            <person name="Takemoto M."/>
            <person name="Kawakami B."/>
            <person name="Yamazaki M."/>
            <person name="Watanabe K."/>
            <person name="Kumagai A."/>
            <person name="Itakura S."/>
            <person name="Fukuzumi Y."/>
            <person name="Fujimori Y."/>
            <person name="Komiyama M."/>
            <person name="Tashiro H."/>
            <person name="Tanigami A."/>
            <person name="Fujiwara T."/>
            <person name="Ono T."/>
            <person name="Yamada K."/>
            <person name="Fujii Y."/>
            <person name="Ozaki K."/>
            <person name="Hirao M."/>
            <person name="Ohmori Y."/>
            <person name="Kawabata A."/>
            <person name="Hikiji T."/>
            <person name="Kobatake N."/>
            <person name="Inagaki H."/>
            <person name="Ikema Y."/>
            <person name="Okamoto S."/>
            <person name="Okitani R."/>
            <person name="Kawakami T."/>
            <person name="Noguchi S."/>
            <person name="Itoh T."/>
            <person name="Shigeta K."/>
            <person name="Senba T."/>
            <person name="Matsumura K."/>
            <person name="Nakajima Y."/>
            <person name="Mizuno T."/>
            <person name="Morinaga M."/>
            <person name="Sasaki M."/>
            <person name="Togashi T."/>
            <person name="Oyama M."/>
            <person name="Hata H."/>
            <person name="Watanabe M."/>
            <person name="Komatsu T."/>
            <person name="Mizushima-Sugano J."/>
            <person name="Satoh T."/>
            <person name="Shirai Y."/>
            <person name="Takahashi Y."/>
            <person name="Nakagawa K."/>
            <person name="Okumura K."/>
            <person name="Nagase T."/>
            <person name="Nomura N."/>
            <person name="Kikuchi H."/>
            <person name="Masuho Y."/>
            <person name="Yamashita R."/>
            <person name="Nakai K."/>
            <person name="Yada T."/>
            <person name="Nakamura Y."/>
            <person name="Ohara O."/>
            <person name="Isogai T."/>
            <person name="Sugano S."/>
        </authorList>
    </citation>
    <scope>NUCLEOTIDE SEQUENCE [LARGE SCALE MRNA]</scope>
    <source>
        <tissue>Hippocampus</tissue>
    </source>
</reference>
<reference key="9">
    <citation type="submission" date="2005-09" db="EMBL/GenBank/DDBJ databases">
        <authorList>
            <person name="Mural R.J."/>
            <person name="Istrail S."/>
            <person name="Sutton G.G."/>
            <person name="Florea L."/>
            <person name="Halpern A.L."/>
            <person name="Mobarry C.M."/>
            <person name="Lippert R."/>
            <person name="Walenz B."/>
            <person name="Shatkay H."/>
            <person name="Dew I."/>
            <person name="Miller J.R."/>
            <person name="Flanigan M.J."/>
            <person name="Edwards N.J."/>
            <person name="Bolanos R."/>
            <person name="Fasulo D."/>
            <person name="Halldorsson B.V."/>
            <person name="Hannenhalli S."/>
            <person name="Turner R."/>
            <person name="Yooseph S."/>
            <person name="Lu F."/>
            <person name="Nusskern D.R."/>
            <person name="Shue B.C."/>
            <person name="Zheng X.H."/>
            <person name="Zhong F."/>
            <person name="Delcher A.L."/>
            <person name="Huson D.H."/>
            <person name="Kravitz S.A."/>
            <person name="Mouchard L."/>
            <person name="Reinert K."/>
            <person name="Remington K.A."/>
            <person name="Clark A.G."/>
            <person name="Waterman M.S."/>
            <person name="Eichler E.E."/>
            <person name="Adams M.D."/>
            <person name="Hunkapiller M.W."/>
            <person name="Myers E.W."/>
            <person name="Venter J.C."/>
        </authorList>
    </citation>
    <scope>NUCLEOTIDE SEQUENCE [LARGE SCALE GENOMIC DNA]</scope>
</reference>
<reference key="10">
    <citation type="journal article" date="2004" name="Genome Res.">
        <title>The status, quality, and expansion of the NIH full-length cDNA project: the Mammalian Gene Collection (MGC).</title>
        <authorList>
            <consortium name="The MGC Project Team"/>
        </authorList>
    </citation>
    <scope>NUCLEOTIDE SEQUENCE [LARGE SCALE MRNA]</scope>
    <scope>VARIANT THR-3</scope>
    <source>
        <tissue>B-cell</tissue>
        <tissue>Ovary</tissue>
    </source>
</reference>
<reference key="11">
    <citation type="journal article" date="1999" name="Mamm. Genome">
        <title>The 5-prime region of the COX4 gene contains a novel overlapping gene, NOC4.</title>
        <authorList>
            <person name="Bachman N.J."/>
            <person name="Wu W."/>
            <person name="Schmidt T.R."/>
            <person name="Grossman L.I."/>
            <person name="Lomax M.I."/>
        </authorList>
    </citation>
    <scope>NUCLEOTIDE SEQUENCE [GENOMIC DNA] OF 26-169</scope>
</reference>
<reference key="12">
    <citation type="journal article" date="1992" name="Biochim. Biophys. Acta">
        <title>Subunit IV of human cytochrome c oxidase, polymorphism and a putative isoform.</title>
        <authorList>
            <person name="van Kuilenburg A.B.P."/>
            <person name="van Beeumen J.J."/>
            <person name="Demol H."/>
            <person name="van den Bogert C."/>
            <person name="Schouten I."/>
            <person name="Muijsers A.O."/>
        </authorList>
    </citation>
    <scope>PROTEIN SEQUENCE OF 23-72</scope>
    <source>
        <tissue>Heart</tissue>
        <tissue>Muscle</tissue>
    </source>
</reference>
<reference key="13">
    <citation type="journal article" date="2009" name="Science">
        <title>Lysine acetylation targets protein complexes and co-regulates major cellular functions.</title>
        <authorList>
            <person name="Choudhary C."/>
            <person name="Kumar C."/>
            <person name="Gnad F."/>
            <person name="Nielsen M.L."/>
            <person name="Rehman M."/>
            <person name="Walther T.C."/>
            <person name="Olsen J.V."/>
            <person name="Mann M."/>
        </authorList>
    </citation>
    <scope>ACETYLATION [LARGE SCALE ANALYSIS] AT LYS-53 AND LYS-60</scope>
    <scope>IDENTIFICATION BY MASS SPECTROMETRY [LARGE SCALE ANALYSIS]</scope>
</reference>
<reference key="14">
    <citation type="journal article" date="2011" name="BMC Syst. Biol.">
        <title>Initial characterization of the human central proteome.</title>
        <authorList>
            <person name="Burkard T.R."/>
            <person name="Planyavsky M."/>
            <person name="Kaupe I."/>
            <person name="Breitwieser F.P."/>
            <person name="Buerckstuemmer T."/>
            <person name="Bennett K.L."/>
            <person name="Superti-Furga G."/>
            <person name="Colinge J."/>
        </authorList>
    </citation>
    <scope>IDENTIFICATION BY MASS SPECTROMETRY [LARGE SCALE ANALYSIS]</scope>
</reference>
<reference key="15">
    <citation type="journal article" date="2014" name="J. Proteomics">
        <title>An enzyme assisted RP-RPLC approach for in-depth analysis of human liver phosphoproteome.</title>
        <authorList>
            <person name="Bian Y."/>
            <person name="Song C."/>
            <person name="Cheng K."/>
            <person name="Dong M."/>
            <person name="Wang F."/>
            <person name="Huang J."/>
            <person name="Sun D."/>
            <person name="Wang L."/>
            <person name="Ye M."/>
            <person name="Zou H."/>
        </authorList>
    </citation>
    <scope>IDENTIFICATION BY MASS SPECTROMETRY [LARGE SCALE ANALYSIS]</scope>
    <source>
        <tissue>Liver</tissue>
    </source>
</reference>
<reference key="16">
    <citation type="journal article" date="2015" name="Proteomics">
        <title>N-terminome analysis of the human mitochondrial proteome.</title>
        <authorList>
            <person name="Vaca Jacome A.S."/>
            <person name="Rabilloud T."/>
            <person name="Schaeffer-Reiss C."/>
            <person name="Rompais M."/>
            <person name="Ayoub D."/>
            <person name="Lane L."/>
            <person name="Bairoch A."/>
            <person name="Van Dorsselaer A."/>
            <person name="Carapito C."/>
        </authorList>
    </citation>
    <scope>CLEAVAGE OF TRANSIT PEPTIDE [LARGE SCALE ANALYSIS] AFTER ARG-22</scope>
    <scope>IDENTIFICATION BY MASS SPECTROMETRY [LARGE SCALE ANALYSIS]</scope>
</reference>
<reference key="17">
    <citation type="journal article" date="2016" name="Biochem. J.">
        <title>The mammalian homologue of yeast Afg1 ATPase (lactation elevated 1) mediates degradation of nuclear-encoded complex IV subunits.</title>
        <authorList>
            <person name="Cesnekova J."/>
            <person name="Rodinova M."/>
            <person name="Hansikova H."/>
            <person name="Houstek J."/>
            <person name="Zeman J."/>
            <person name="Stiburek L."/>
        </authorList>
    </citation>
    <scope>INTERACTION WITH AFG1L</scope>
</reference>
<reference key="18">
    <citation type="journal article" date="2017" name="Eur. J. Hum. Genet.">
        <title>Mutation in the COX4I1 gene is associated with short stature, poor weight gain and increased chromosomal breaks, simulating Fanconi anemia.</title>
        <authorList>
            <person name="Abu-Libdeh B."/>
            <person name="Douiev L."/>
            <person name="Amro S."/>
            <person name="Shahrour M."/>
            <person name="Ta-Shma A."/>
            <person name="Miller C."/>
            <person name="Elpeleg O."/>
            <person name="Saada A."/>
        </authorList>
    </citation>
    <scope>INVOLVEMENT IN MC4DN16</scope>
    <scope>VARIANT MC4DN16 101-LYS-THR-102 DELINS ASN-SER</scope>
    <scope>CHARACTERIZATION OF VARIANT MC4DN16 101-LYS-THR-102 DELINS ASN-SER</scope>
</reference>
<reference key="19">
    <citation type="journal article" date="2019" name="Am. J. Med. Genet. A">
        <title>Biallelic variants in COX4I1 associated with a novel phenotype resembling Leigh syndrome with developmental regression, intellectual disability, and seizures.</title>
        <authorList>
            <person name="Pillai N.R."/>
            <person name="AlDhaheri N.S."/>
            <person name="Ghosh R."/>
            <person name="Lim J."/>
            <person name="Streff H."/>
            <person name="Nayak A."/>
            <person name="Graham B.H."/>
            <person name="Hanchard N.A."/>
            <person name="Elsea S.H."/>
            <person name="Scaglia F."/>
        </authorList>
    </citation>
    <scope>INVOLVEMENT IN MC4DN16</scope>
    <scope>VARIANT MC4DN16 THR-152</scope>
</reference>
<reference key="20">
    <citation type="journal article" date="2017" name="Cell">
        <title>Architecture of human mitochondrial respiratory megacomplex I2III2IV2.</title>
        <authorList>
            <person name="Guo R."/>
            <person name="Zong S."/>
            <person name="Wu M."/>
            <person name="Gu J."/>
            <person name="Yang M."/>
        </authorList>
    </citation>
    <scope>STRUCTURE BY ELECTRON MICROSCOPY (3.90 ANGSTROMS)</scope>
    <scope>SUBUNIT</scope>
</reference>
<reference key="21">
    <citation type="journal article" date="2018" name="Cell Res.">
        <title>Structure of the intact 14-subunit human cytochrome c oxidase.</title>
        <authorList>
            <person name="Zong S."/>
            <person name="Wu M."/>
            <person name="Gu J."/>
            <person name="Liu T."/>
            <person name="Guo R."/>
            <person name="Yang M."/>
        </authorList>
    </citation>
    <scope>STRUCTURE BY ELECTRON MICROSCOPY (3.60 ANGSTROMS) OF 26-169</scope>
</reference>